<gene>
    <name evidence="1" type="primary">rpsG</name>
    <name type="ordered locus">CbuK_0429</name>
</gene>
<comment type="function">
    <text evidence="1">One of the primary rRNA binding proteins, it binds directly to 16S rRNA where it nucleates assembly of the head domain of the 30S subunit. Is located at the subunit interface close to the decoding center, probably blocks exit of the E-site tRNA.</text>
</comment>
<comment type="subunit">
    <text evidence="1">Part of the 30S ribosomal subunit. Contacts proteins S9 and S11.</text>
</comment>
<comment type="similarity">
    <text evidence="1">Belongs to the universal ribosomal protein uS7 family.</text>
</comment>
<name>RS7_COXB1</name>
<organism>
    <name type="scientific">Coxiella burnetii (strain CbuK_Q154)</name>
    <name type="common">Coxiella burnetii (strain Q154)</name>
    <dbReference type="NCBI Taxonomy" id="434924"/>
    <lineage>
        <taxon>Bacteria</taxon>
        <taxon>Pseudomonadati</taxon>
        <taxon>Pseudomonadota</taxon>
        <taxon>Gammaproteobacteria</taxon>
        <taxon>Legionellales</taxon>
        <taxon>Coxiellaceae</taxon>
        <taxon>Coxiella</taxon>
    </lineage>
</organism>
<protein>
    <recommendedName>
        <fullName evidence="1">Small ribosomal subunit protein uS7</fullName>
    </recommendedName>
    <alternativeName>
        <fullName evidence="3">30S ribosomal protein S7</fullName>
    </alternativeName>
</protein>
<dbReference type="EMBL" id="CP001020">
    <property type="protein sequence ID" value="ACJ19712.1"/>
    <property type="molecule type" value="Genomic_DNA"/>
</dbReference>
<dbReference type="RefSeq" id="WP_005771622.1">
    <property type="nucleotide sequence ID" value="NC_011528.1"/>
</dbReference>
<dbReference type="SMR" id="B6J5C8"/>
<dbReference type="KEGG" id="cbc:CbuK_0429"/>
<dbReference type="HOGENOM" id="CLU_072226_1_1_6"/>
<dbReference type="GO" id="GO:0015935">
    <property type="term" value="C:small ribosomal subunit"/>
    <property type="evidence" value="ECO:0007669"/>
    <property type="project" value="InterPro"/>
</dbReference>
<dbReference type="GO" id="GO:0019843">
    <property type="term" value="F:rRNA binding"/>
    <property type="evidence" value="ECO:0007669"/>
    <property type="project" value="UniProtKB-UniRule"/>
</dbReference>
<dbReference type="GO" id="GO:0003735">
    <property type="term" value="F:structural constituent of ribosome"/>
    <property type="evidence" value="ECO:0007669"/>
    <property type="project" value="InterPro"/>
</dbReference>
<dbReference type="GO" id="GO:0000049">
    <property type="term" value="F:tRNA binding"/>
    <property type="evidence" value="ECO:0007669"/>
    <property type="project" value="UniProtKB-UniRule"/>
</dbReference>
<dbReference type="GO" id="GO:0006412">
    <property type="term" value="P:translation"/>
    <property type="evidence" value="ECO:0007669"/>
    <property type="project" value="UniProtKB-UniRule"/>
</dbReference>
<dbReference type="CDD" id="cd14869">
    <property type="entry name" value="uS7_Bacteria"/>
    <property type="match status" value="1"/>
</dbReference>
<dbReference type="Gene3D" id="1.10.455.10">
    <property type="entry name" value="Ribosomal protein S7 domain"/>
    <property type="match status" value="1"/>
</dbReference>
<dbReference type="HAMAP" id="MF_00480_B">
    <property type="entry name" value="Ribosomal_uS7_B"/>
    <property type="match status" value="1"/>
</dbReference>
<dbReference type="InterPro" id="IPR000235">
    <property type="entry name" value="Ribosomal_uS7"/>
</dbReference>
<dbReference type="InterPro" id="IPR005717">
    <property type="entry name" value="Ribosomal_uS7_bac/org-type"/>
</dbReference>
<dbReference type="InterPro" id="IPR020606">
    <property type="entry name" value="Ribosomal_uS7_CS"/>
</dbReference>
<dbReference type="InterPro" id="IPR023798">
    <property type="entry name" value="Ribosomal_uS7_dom"/>
</dbReference>
<dbReference type="InterPro" id="IPR036823">
    <property type="entry name" value="Ribosomal_uS7_dom_sf"/>
</dbReference>
<dbReference type="NCBIfam" id="TIGR01029">
    <property type="entry name" value="rpsG_bact"/>
    <property type="match status" value="1"/>
</dbReference>
<dbReference type="PANTHER" id="PTHR11205">
    <property type="entry name" value="RIBOSOMAL PROTEIN S7"/>
    <property type="match status" value="1"/>
</dbReference>
<dbReference type="Pfam" id="PF00177">
    <property type="entry name" value="Ribosomal_S7"/>
    <property type="match status" value="1"/>
</dbReference>
<dbReference type="PIRSF" id="PIRSF002122">
    <property type="entry name" value="RPS7p_RPS7a_RPS5e_RPS7o"/>
    <property type="match status" value="1"/>
</dbReference>
<dbReference type="SUPFAM" id="SSF47973">
    <property type="entry name" value="Ribosomal protein S7"/>
    <property type="match status" value="1"/>
</dbReference>
<dbReference type="PROSITE" id="PS00052">
    <property type="entry name" value="RIBOSOMAL_S7"/>
    <property type="match status" value="1"/>
</dbReference>
<reference key="1">
    <citation type="journal article" date="2009" name="Infect. Immun.">
        <title>Comparative genomics reveal extensive transposon-mediated genomic plasticity and diversity among potential effector proteins within the genus Coxiella.</title>
        <authorList>
            <person name="Beare P.A."/>
            <person name="Unsworth N."/>
            <person name="Andoh M."/>
            <person name="Voth D.E."/>
            <person name="Omsland A."/>
            <person name="Gilk S.D."/>
            <person name="Williams K.P."/>
            <person name="Sobral B.W."/>
            <person name="Kupko J.J. III"/>
            <person name="Porcella S.F."/>
            <person name="Samuel J.E."/>
            <person name="Heinzen R.A."/>
        </authorList>
    </citation>
    <scope>NUCLEOTIDE SEQUENCE [LARGE SCALE GENOMIC DNA]</scope>
    <source>
        <strain>CbuK_Q154</strain>
    </source>
</reference>
<proteinExistence type="inferred from homology"/>
<feature type="chain" id="PRO_1000125924" description="Small ribosomal subunit protein uS7">
    <location>
        <begin position="1"/>
        <end position="191"/>
    </location>
</feature>
<feature type="region of interest" description="Disordered" evidence="2">
    <location>
        <begin position="56"/>
        <end position="80"/>
    </location>
</feature>
<evidence type="ECO:0000255" key="1">
    <source>
        <dbReference type="HAMAP-Rule" id="MF_00480"/>
    </source>
</evidence>
<evidence type="ECO:0000256" key="2">
    <source>
        <dbReference type="SAM" id="MobiDB-lite"/>
    </source>
</evidence>
<evidence type="ECO:0000305" key="3"/>
<keyword id="KW-0687">Ribonucleoprotein</keyword>
<keyword id="KW-0689">Ribosomal protein</keyword>
<keyword id="KW-0694">RNA-binding</keyword>
<keyword id="KW-0699">rRNA-binding</keyword>
<keyword id="KW-0820">tRNA-binding</keyword>
<accession>B6J5C8</accession>
<sequence length="191" mass="21319">MARRKAAPKRETLPDPLFHSELLAKFINAVMRNGKKSVAEKIVYGALDVVAKRVQNKSGEQGDGDGESGGKAGGIKKRSLGDIRTDENARALALETFKGALDKVMPNVEVKSRRVGGSTYQVPVEIRMARRQALARRWLVEYANKRNEKTMVLRLAHEILDAVEGRGGAIKKREDVHRMAKANQAFAHYRW</sequence>